<dbReference type="EMBL" id="BX248296">
    <property type="protein sequence ID" value="CAD62624.1"/>
    <property type="status" value="ALT_INIT"/>
    <property type="molecule type" value="mRNA"/>
</dbReference>
<dbReference type="BioMuta" id="HGNC:19842"/>
<dbReference type="PeptideAtlas" id="Q86SY8"/>
<dbReference type="AGR" id="HGNC:19842"/>
<dbReference type="GeneCards" id="KTN1-AS1"/>
<dbReference type="HGNC" id="HGNC:19842">
    <property type="gene designation" value="KTN1-AS1"/>
</dbReference>
<dbReference type="neXtProt" id="NX_Q86SY8"/>
<dbReference type="InParanoid" id="Q86SY8"/>
<dbReference type="PAN-GO" id="Q86SY8">
    <property type="GO annotations" value="0 GO annotations based on evolutionary models"/>
</dbReference>
<dbReference type="PhylomeDB" id="Q86SY8"/>
<dbReference type="ChiTaRS" id="KTN1-AS1">
    <property type="organism name" value="human"/>
</dbReference>
<dbReference type="Pharos" id="Q86SY8">
    <property type="development level" value="Tdark"/>
</dbReference>
<dbReference type="Proteomes" id="UP000005640">
    <property type="component" value="Unplaced"/>
</dbReference>
<dbReference type="RNAct" id="Q86SY8">
    <property type="molecule type" value="protein"/>
</dbReference>
<organism>
    <name type="scientific">Homo sapiens</name>
    <name type="common">Human</name>
    <dbReference type="NCBI Taxonomy" id="9606"/>
    <lineage>
        <taxon>Eukaryota</taxon>
        <taxon>Metazoa</taxon>
        <taxon>Chordata</taxon>
        <taxon>Craniata</taxon>
        <taxon>Vertebrata</taxon>
        <taxon>Euteleostomi</taxon>
        <taxon>Mammalia</taxon>
        <taxon>Eutheria</taxon>
        <taxon>Euarchontoglires</taxon>
        <taxon>Primates</taxon>
        <taxon>Haplorrhini</taxon>
        <taxon>Catarrhini</taxon>
        <taxon>Hominidae</taxon>
        <taxon>Homo</taxon>
    </lineage>
</organism>
<gene>
    <name type="primary">KTN1-AS1</name>
    <name type="synonym">C14orf33</name>
</gene>
<keyword id="KW-1185">Reference proteome</keyword>
<proteinExistence type="uncertain"/>
<accession>Q86SY8</accession>
<protein>
    <recommendedName>
        <fullName>Putative uncharacterized protein KTN1-AS1</fullName>
    </recommendedName>
    <alternativeName>
        <fullName>KTN1 antisense RNA 1</fullName>
    </alternativeName>
    <alternativeName>
        <fullName>KTN1 antisense gene protein 1</fullName>
    </alternativeName>
</protein>
<reference key="1">
    <citation type="submission" date="2003-02" db="EMBL/GenBank/DDBJ databases">
        <title>Full-length cDNA libraries and normalization.</title>
        <authorList>
            <person name="Li W.B."/>
            <person name="Gruber C."/>
            <person name="Jessee J."/>
            <person name="Polayes D."/>
        </authorList>
    </citation>
    <scope>NUCLEOTIDE SEQUENCE [LARGE SCALE MRNA]</scope>
    <source>
        <tissue>Cervix carcinoma</tissue>
    </source>
</reference>
<name>KTAS1_HUMAN</name>
<evidence type="ECO:0000305" key="1"/>
<sequence length="53" mass="5770">MEAAGGFQVHFHPSNGDGRFIETSSAADLEVISYSSKVSVTERCFIKVCTVLF</sequence>
<feature type="chain" id="PRO_0000295941" description="Putative uncharacterized protein KTN1-AS1">
    <location>
        <begin position="1"/>
        <end position="53"/>
    </location>
</feature>
<comment type="caution">
    <text evidence="1">Product of a dubious gene prediction.</text>
</comment>
<comment type="sequence caution" evidence="1">
    <conflict type="erroneous initiation">
        <sequence resource="EMBL-CDS" id="CAD62624"/>
    </conflict>
</comment>